<gene>
    <name evidence="1" type="primary">acpP</name>
    <name type="ordered locus">BMEI1475</name>
</gene>
<evidence type="ECO:0000255" key="1">
    <source>
        <dbReference type="HAMAP-Rule" id="MF_01217"/>
    </source>
</evidence>
<evidence type="ECO:0000255" key="2">
    <source>
        <dbReference type="PROSITE-ProRule" id="PRU00258"/>
    </source>
</evidence>
<name>ACP_BRUME</name>
<dbReference type="EMBL" id="AE008917">
    <property type="protein sequence ID" value="AAL52656.1"/>
    <property type="molecule type" value="Genomic_DNA"/>
</dbReference>
<dbReference type="PIR" id="AE3436">
    <property type="entry name" value="AE3436"/>
</dbReference>
<dbReference type="RefSeq" id="WP_002963616.1">
    <property type="nucleotide sequence ID" value="NZ_GG703778.1"/>
</dbReference>
<dbReference type="SMR" id="P63437"/>
<dbReference type="KEGG" id="bme:BMEI1475"/>
<dbReference type="KEGG" id="bmel:DK63_2013"/>
<dbReference type="PATRIC" id="fig|224914.52.peg.2115"/>
<dbReference type="eggNOG" id="COG0236">
    <property type="taxonomic scope" value="Bacteria"/>
</dbReference>
<dbReference type="UniPathway" id="UPA00094"/>
<dbReference type="Proteomes" id="UP000000419">
    <property type="component" value="Chromosome I"/>
</dbReference>
<dbReference type="GO" id="GO:0005829">
    <property type="term" value="C:cytosol"/>
    <property type="evidence" value="ECO:0007669"/>
    <property type="project" value="TreeGrafter"/>
</dbReference>
<dbReference type="GO" id="GO:0016020">
    <property type="term" value="C:membrane"/>
    <property type="evidence" value="ECO:0007669"/>
    <property type="project" value="GOC"/>
</dbReference>
<dbReference type="GO" id="GO:0000035">
    <property type="term" value="F:acyl binding"/>
    <property type="evidence" value="ECO:0007669"/>
    <property type="project" value="TreeGrafter"/>
</dbReference>
<dbReference type="GO" id="GO:0000036">
    <property type="term" value="F:acyl carrier activity"/>
    <property type="evidence" value="ECO:0007669"/>
    <property type="project" value="UniProtKB-UniRule"/>
</dbReference>
<dbReference type="GO" id="GO:0031177">
    <property type="term" value="F:phosphopantetheine binding"/>
    <property type="evidence" value="ECO:0007669"/>
    <property type="project" value="InterPro"/>
</dbReference>
<dbReference type="GO" id="GO:0009245">
    <property type="term" value="P:lipid A biosynthetic process"/>
    <property type="evidence" value="ECO:0007669"/>
    <property type="project" value="TreeGrafter"/>
</dbReference>
<dbReference type="FunFam" id="1.10.1200.10:FF:000001">
    <property type="entry name" value="Acyl carrier protein"/>
    <property type="match status" value="1"/>
</dbReference>
<dbReference type="Gene3D" id="1.10.1200.10">
    <property type="entry name" value="ACP-like"/>
    <property type="match status" value="1"/>
</dbReference>
<dbReference type="HAMAP" id="MF_01217">
    <property type="entry name" value="Acyl_carrier"/>
    <property type="match status" value="1"/>
</dbReference>
<dbReference type="InterPro" id="IPR003231">
    <property type="entry name" value="ACP"/>
</dbReference>
<dbReference type="InterPro" id="IPR036736">
    <property type="entry name" value="ACP-like_sf"/>
</dbReference>
<dbReference type="InterPro" id="IPR020806">
    <property type="entry name" value="PKS_PP-bd"/>
</dbReference>
<dbReference type="InterPro" id="IPR009081">
    <property type="entry name" value="PP-bd_ACP"/>
</dbReference>
<dbReference type="InterPro" id="IPR006162">
    <property type="entry name" value="Ppantetheine_attach_site"/>
</dbReference>
<dbReference type="NCBIfam" id="TIGR00517">
    <property type="entry name" value="acyl_carrier"/>
    <property type="match status" value="1"/>
</dbReference>
<dbReference type="NCBIfam" id="NF002148">
    <property type="entry name" value="PRK00982.1-2"/>
    <property type="match status" value="1"/>
</dbReference>
<dbReference type="NCBIfam" id="NF002149">
    <property type="entry name" value="PRK00982.1-3"/>
    <property type="match status" value="1"/>
</dbReference>
<dbReference type="NCBIfam" id="NF002150">
    <property type="entry name" value="PRK00982.1-4"/>
    <property type="match status" value="1"/>
</dbReference>
<dbReference type="NCBIfam" id="NF002151">
    <property type="entry name" value="PRK00982.1-5"/>
    <property type="match status" value="1"/>
</dbReference>
<dbReference type="PANTHER" id="PTHR20863">
    <property type="entry name" value="ACYL CARRIER PROTEIN"/>
    <property type="match status" value="1"/>
</dbReference>
<dbReference type="PANTHER" id="PTHR20863:SF76">
    <property type="entry name" value="CARRIER DOMAIN-CONTAINING PROTEIN"/>
    <property type="match status" value="1"/>
</dbReference>
<dbReference type="Pfam" id="PF00550">
    <property type="entry name" value="PP-binding"/>
    <property type="match status" value="1"/>
</dbReference>
<dbReference type="SMART" id="SM00823">
    <property type="entry name" value="PKS_PP"/>
    <property type="match status" value="1"/>
</dbReference>
<dbReference type="SUPFAM" id="SSF47336">
    <property type="entry name" value="ACP-like"/>
    <property type="match status" value="1"/>
</dbReference>
<dbReference type="PROSITE" id="PS50075">
    <property type="entry name" value="CARRIER"/>
    <property type="match status" value="1"/>
</dbReference>
<dbReference type="PROSITE" id="PS00012">
    <property type="entry name" value="PHOSPHOPANTETHEINE"/>
    <property type="match status" value="1"/>
</dbReference>
<keyword id="KW-0963">Cytoplasm</keyword>
<keyword id="KW-0275">Fatty acid biosynthesis</keyword>
<keyword id="KW-0276">Fatty acid metabolism</keyword>
<keyword id="KW-0444">Lipid biosynthesis</keyword>
<keyword id="KW-0443">Lipid metabolism</keyword>
<keyword id="KW-0596">Phosphopantetheine</keyword>
<keyword id="KW-0597">Phosphoprotein</keyword>
<accession>P63437</accession>
<accession>Q8YFP5</accession>
<protein>
    <recommendedName>
        <fullName evidence="1">Acyl carrier protein AcpP</fullName>
        <shortName evidence="1">ACP</shortName>
    </recommendedName>
</protein>
<feature type="chain" id="PRO_0000180115" description="Acyl carrier protein AcpP">
    <location>
        <begin position="1"/>
        <end position="78"/>
    </location>
</feature>
<feature type="domain" description="Carrier" evidence="2">
    <location>
        <begin position="2"/>
        <end position="77"/>
    </location>
</feature>
<feature type="modified residue" description="O-(pantetheine 4'-phosphoryl)serine" evidence="2">
    <location>
        <position position="37"/>
    </location>
</feature>
<sequence length="78" mass="8301">MSDTAERVKKIVVEHLGVDADKVTEGASFIDDLGADSLDTVELVMAFEEEFGVEIPDDAAETILTVGDAVKFIDKASA</sequence>
<proteinExistence type="inferred from homology"/>
<organism>
    <name type="scientific">Brucella melitensis biotype 1 (strain ATCC 23456 / CCUG 17765 / NCTC 10094 / 16M)</name>
    <dbReference type="NCBI Taxonomy" id="224914"/>
    <lineage>
        <taxon>Bacteria</taxon>
        <taxon>Pseudomonadati</taxon>
        <taxon>Pseudomonadota</taxon>
        <taxon>Alphaproteobacteria</taxon>
        <taxon>Hyphomicrobiales</taxon>
        <taxon>Brucellaceae</taxon>
        <taxon>Brucella/Ochrobactrum group</taxon>
        <taxon>Brucella</taxon>
    </lineage>
</organism>
<reference key="1">
    <citation type="journal article" date="2002" name="Proc. Natl. Acad. Sci. U.S.A.">
        <title>The genome sequence of the facultative intracellular pathogen Brucella melitensis.</title>
        <authorList>
            <person name="DelVecchio V.G."/>
            <person name="Kapatral V."/>
            <person name="Redkar R.J."/>
            <person name="Patra G."/>
            <person name="Mujer C."/>
            <person name="Los T."/>
            <person name="Ivanova N."/>
            <person name="Anderson I."/>
            <person name="Bhattacharyya A."/>
            <person name="Lykidis A."/>
            <person name="Reznik G."/>
            <person name="Jablonski L."/>
            <person name="Larsen N."/>
            <person name="D'Souza M."/>
            <person name="Bernal A."/>
            <person name="Mazur M."/>
            <person name="Goltsman E."/>
            <person name="Selkov E."/>
            <person name="Elzer P.H."/>
            <person name="Hagius S."/>
            <person name="O'Callaghan D."/>
            <person name="Letesson J.-J."/>
            <person name="Haselkorn R."/>
            <person name="Kyrpides N.C."/>
            <person name="Overbeek R."/>
        </authorList>
    </citation>
    <scope>NUCLEOTIDE SEQUENCE [LARGE SCALE GENOMIC DNA]</scope>
    <source>
        <strain>ATCC 23456 / CCUG 17765 / NCTC 10094 / 16M</strain>
    </source>
</reference>
<comment type="function">
    <text evidence="1">Carrier of the growing fatty acid chain in fatty acid biosynthesis.</text>
</comment>
<comment type="pathway">
    <text evidence="1">Lipid metabolism; fatty acid biosynthesis.</text>
</comment>
<comment type="subcellular location">
    <subcellularLocation>
        <location evidence="1">Cytoplasm</location>
    </subcellularLocation>
</comment>
<comment type="PTM">
    <text evidence="1">4'-phosphopantetheine is transferred from CoA to a specific serine of apo-ACP by AcpS. This modification is essential for activity because fatty acids are bound in thioester linkage to the sulfhydryl of the prosthetic group.</text>
</comment>
<comment type="similarity">
    <text evidence="1">Belongs to the acyl carrier protein (ACP) family.</text>
</comment>